<name>FABZ_RUEST</name>
<proteinExistence type="inferred from homology"/>
<sequence length="160" mass="17440">MSADANPDLKSADIGLIQQILPHRYPFLLVDKVVDIDGYQSARGIKNVTMNEPHFQGHFPGTPIMPGVTIVEAMAQTSGVMLGVGMDLIGTDMLIYFMNIDKCKFRRKVVPGDVLEMHVETVRGKPGGKIFKFSGRATVDGELAAEAEFTAMIDRDGKDG</sequence>
<keyword id="KW-0963">Cytoplasm</keyword>
<keyword id="KW-0441">Lipid A biosynthesis</keyword>
<keyword id="KW-0444">Lipid biosynthesis</keyword>
<keyword id="KW-0443">Lipid metabolism</keyword>
<keyword id="KW-0456">Lyase</keyword>
<keyword id="KW-1185">Reference proteome</keyword>
<feature type="chain" id="PRO_0000340802" description="3-hydroxyacyl-[acyl-carrier-protein] dehydratase FabZ">
    <location>
        <begin position="1"/>
        <end position="160"/>
    </location>
</feature>
<feature type="active site" evidence="1">
    <location>
        <position position="58"/>
    </location>
</feature>
<reference key="1">
    <citation type="submission" date="2006-05" db="EMBL/GenBank/DDBJ databases">
        <title>Complete sequence of chromosome of Silicibacter sp. TM1040.</title>
        <authorList>
            <consortium name="US DOE Joint Genome Institute"/>
            <person name="Copeland A."/>
            <person name="Lucas S."/>
            <person name="Lapidus A."/>
            <person name="Barry K."/>
            <person name="Detter J.C."/>
            <person name="Glavina del Rio T."/>
            <person name="Hammon N."/>
            <person name="Israni S."/>
            <person name="Dalin E."/>
            <person name="Tice H."/>
            <person name="Pitluck S."/>
            <person name="Brettin T."/>
            <person name="Bruce D."/>
            <person name="Han C."/>
            <person name="Tapia R."/>
            <person name="Goodwin L."/>
            <person name="Thompson L.S."/>
            <person name="Gilna P."/>
            <person name="Schmutz J."/>
            <person name="Larimer F."/>
            <person name="Land M."/>
            <person name="Hauser L."/>
            <person name="Kyrpides N."/>
            <person name="Kim E."/>
            <person name="Belas R."/>
            <person name="Moran M.A."/>
            <person name="Buchan A."/>
            <person name="Gonzalez J.M."/>
            <person name="Schell M.A."/>
            <person name="Sun F."/>
            <person name="Richardson P."/>
        </authorList>
    </citation>
    <scope>NUCLEOTIDE SEQUENCE [LARGE SCALE GENOMIC DNA]</scope>
    <source>
        <strain>TM1040</strain>
    </source>
</reference>
<protein>
    <recommendedName>
        <fullName evidence="1">3-hydroxyacyl-[acyl-carrier-protein] dehydratase FabZ</fullName>
        <ecNumber evidence="1">4.2.1.59</ecNumber>
    </recommendedName>
    <alternativeName>
        <fullName evidence="1">(3R)-hydroxymyristoyl-[acyl-carrier-protein] dehydratase</fullName>
        <shortName evidence="1">(3R)-hydroxymyristoyl-ACP dehydrase</shortName>
    </alternativeName>
    <alternativeName>
        <fullName evidence="1">Beta-hydroxyacyl-ACP dehydratase</fullName>
    </alternativeName>
</protein>
<comment type="function">
    <text evidence="1">Involved in unsaturated fatty acids biosynthesis. Catalyzes the dehydration of short chain beta-hydroxyacyl-ACPs and long chain saturated and unsaturated beta-hydroxyacyl-ACPs.</text>
</comment>
<comment type="catalytic activity">
    <reaction evidence="1">
        <text>a (3R)-hydroxyacyl-[ACP] = a (2E)-enoyl-[ACP] + H2O</text>
        <dbReference type="Rhea" id="RHEA:13097"/>
        <dbReference type="Rhea" id="RHEA-COMP:9925"/>
        <dbReference type="Rhea" id="RHEA-COMP:9945"/>
        <dbReference type="ChEBI" id="CHEBI:15377"/>
        <dbReference type="ChEBI" id="CHEBI:78784"/>
        <dbReference type="ChEBI" id="CHEBI:78827"/>
        <dbReference type="EC" id="4.2.1.59"/>
    </reaction>
</comment>
<comment type="subcellular location">
    <subcellularLocation>
        <location evidence="1">Cytoplasm</location>
    </subcellularLocation>
</comment>
<comment type="similarity">
    <text evidence="1">Belongs to the thioester dehydratase family. FabZ subfamily.</text>
</comment>
<organism>
    <name type="scientific">Ruegeria sp. (strain TM1040)</name>
    <name type="common">Silicibacter sp.</name>
    <dbReference type="NCBI Taxonomy" id="292414"/>
    <lineage>
        <taxon>Bacteria</taxon>
        <taxon>Pseudomonadati</taxon>
        <taxon>Pseudomonadota</taxon>
        <taxon>Alphaproteobacteria</taxon>
        <taxon>Rhodobacterales</taxon>
        <taxon>Roseobacteraceae</taxon>
        <taxon>Ruegeria</taxon>
    </lineage>
</organism>
<evidence type="ECO:0000255" key="1">
    <source>
        <dbReference type="HAMAP-Rule" id="MF_00406"/>
    </source>
</evidence>
<gene>
    <name evidence="1" type="primary">fabZ</name>
    <name type="ordered locus">TM1040_1405</name>
</gene>
<dbReference type="EC" id="4.2.1.59" evidence="1"/>
<dbReference type="EMBL" id="CP000377">
    <property type="protein sequence ID" value="ABF64138.1"/>
    <property type="molecule type" value="Genomic_DNA"/>
</dbReference>
<dbReference type="RefSeq" id="WP_005617880.1">
    <property type="nucleotide sequence ID" value="NC_008044.1"/>
</dbReference>
<dbReference type="SMR" id="Q1GGS8"/>
<dbReference type="STRING" id="292414.TM1040_1405"/>
<dbReference type="GeneID" id="28249475"/>
<dbReference type="KEGG" id="sit:TM1040_1405"/>
<dbReference type="eggNOG" id="COG0764">
    <property type="taxonomic scope" value="Bacteria"/>
</dbReference>
<dbReference type="HOGENOM" id="CLU_078912_1_0_5"/>
<dbReference type="OrthoDB" id="9772788at2"/>
<dbReference type="Proteomes" id="UP000000636">
    <property type="component" value="Chromosome"/>
</dbReference>
<dbReference type="GO" id="GO:0005737">
    <property type="term" value="C:cytoplasm"/>
    <property type="evidence" value="ECO:0007669"/>
    <property type="project" value="UniProtKB-SubCell"/>
</dbReference>
<dbReference type="GO" id="GO:0016020">
    <property type="term" value="C:membrane"/>
    <property type="evidence" value="ECO:0007669"/>
    <property type="project" value="GOC"/>
</dbReference>
<dbReference type="GO" id="GO:0019171">
    <property type="term" value="F:(3R)-hydroxyacyl-[acyl-carrier-protein] dehydratase activity"/>
    <property type="evidence" value="ECO:0007669"/>
    <property type="project" value="UniProtKB-EC"/>
</dbReference>
<dbReference type="GO" id="GO:0006633">
    <property type="term" value="P:fatty acid biosynthetic process"/>
    <property type="evidence" value="ECO:0007669"/>
    <property type="project" value="UniProtKB-UniRule"/>
</dbReference>
<dbReference type="GO" id="GO:0009245">
    <property type="term" value="P:lipid A biosynthetic process"/>
    <property type="evidence" value="ECO:0007669"/>
    <property type="project" value="UniProtKB-UniRule"/>
</dbReference>
<dbReference type="CDD" id="cd01288">
    <property type="entry name" value="FabZ"/>
    <property type="match status" value="1"/>
</dbReference>
<dbReference type="FunFam" id="3.10.129.10:FF:000001">
    <property type="entry name" value="3-hydroxyacyl-[acyl-carrier-protein] dehydratase FabZ"/>
    <property type="match status" value="1"/>
</dbReference>
<dbReference type="Gene3D" id="3.10.129.10">
    <property type="entry name" value="Hotdog Thioesterase"/>
    <property type="match status" value="1"/>
</dbReference>
<dbReference type="HAMAP" id="MF_00406">
    <property type="entry name" value="FabZ"/>
    <property type="match status" value="1"/>
</dbReference>
<dbReference type="InterPro" id="IPR013114">
    <property type="entry name" value="FabA_FabZ"/>
</dbReference>
<dbReference type="InterPro" id="IPR010084">
    <property type="entry name" value="FabZ"/>
</dbReference>
<dbReference type="InterPro" id="IPR029069">
    <property type="entry name" value="HotDog_dom_sf"/>
</dbReference>
<dbReference type="NCBIfam" id="TIGR01750">
    <property type="entry name" value="fabZ"/>
    <property type="match status" value="1"/>
</dbReference>
<dbReference type="NCBIfam" id="NF000582">
    <property type="entry name" value="PRK00006.1"/>
    <property type="match status" value="1"/>
</dbReference>
<dbReference type="PANTHER" id="PTHR30272">
    <property type="entry name" value="3-HYDROXYACYL-[ACYL-CARRIER-PROTEIN] DEHYDRATASE"/>
    <property type="match status" value="1"/>
</dbReference>
<dbReference type="PANTHER" id="PTHR30272:SF1">
    <property type="entry name" value="3-HYDROXYACYL-[ACYL-CARRIER-PROTEIN] DEHYDRATASE"/>
    <property type="match status" value="1"/>
</dbReference>
<dbReference type="Pfam" id="PF07977">
    <property type="entry name" value="FabA"/>
    <property type="match status" value="1"/>
</dbReference>
<dbReference type="SUPFAM" id="SSF54637">
    <property type="entry name" value="Thioesterase/thiol ester dehydrase-isomerase"/>
    <property type="match status" value="1"/>
</dbReference>
<accession>Q1GGS8</accession>